<comment type="function">
    <text evidence="1">F(1)F(0) ATP synthase produces ATP from ADP in the presence of a proton or sodium gradient. F-type ATPases consist of two structural domains, F(1) containing the extramembraneous catalytic core and F(0) containing the membrane proton channel, linked together by a central stalk and a peripheral stalk. During catalysis, ATP synthesis in the catalytic domain of F(1) is coupled via a rotary mechanism of the central stalk subunits to proton translocation.</text>
</comment>
<comment type="function">
    <text evidence="1">Component of the F(0) channel, it forms part of the peripheral stalk, linking F(1) to F(0).</text>
</comment>
<comment type="subunit">
    <text evidence="1">F-type ATPases have 2 components, F(1) - the catalytic core - and F(0) - the membrane proton channel. F(1) has five subunits: alpha(3), beta(3), gamma(1), delta(1), epsilon(1). F(0) has three main subunits: a(1), b(2) and c(10-14). The alpha and beta chains form an alternating ring which encloses part of the gamma chain. F(1) is attached to F(0) by a central stalk formed by the gamma and epsilon chains, while a peripheral stalk is formed by the delta and b chains.</text>
</comment>
<comment type="subcellular location">
    <subcellularLocation>
        <location evidence="1">Cell membrane</location>
        <topology evidence="1">Single-pass membrane protein</topology>
    </subcellularLocation>
</comment>
<comment type="similarity">
    <text evidence="1">Belongs to the ATPase B chain family.</text>
</comment>
<keyword id="KW-0066">ATP synthesis</keyword>
<keyword id="KW-1003">Cell membrane</keyword>
<keyword id="KW-0138">CF(0)</keyword>
<keyword id="KW-0375">Hydrogen ion transport</keyword>
<keyword id="KW-0406">Ion transport</keyword>
<keyword id="KW-0472">Membrane</keyword>
<keyword id="KW-0812">Transmembrane</keyword>
<keyword id="KW-1133">Transmembrane helix</keyword>
<keyword id="KW-0813">Transport</keyword>
<name>ATPF_STRPC</name>
<reference key="1">
    <citation type="journal article" date="2006" name="Proc. Natl. Acad. Sci. U.S.A.">
        <title>Molecular genetic anatomy of inter- and intraserotype variation in the human bacterial pathogen group A Streptococcus.</title>
        <authorList>
            <person name="Beres S.B."/>
            <person name="Richter E.W."/>
            <person name="Nagiec M.J."/>
            <person name="Sumby P."/>
            <person name="Porcella S.F."/>
            <person name="DeLeo F.R."/>
            <person name="Musser J.M."/>
        </authorList>
    </citation>
    <scope>NUCLEOTIDE SEQUENCE [LARGE SCALE GENOMIC DNA]</scope>
    <source>
        <strain>MGAS9429</strain>
    </source>
</reference>
<accession>Q1JMJ3</accession>
<feature type="chain" id="PRO_0000368803" description="ATP synthase subunit b">
    <location>
        <begin position="1"/>
        <end position="164"/>
    </location>
</feature>
<feature type="transmembrane region" description="Helical" evidence="1">
    <location>
        <begin position="6"/>
        <end position="26"/>
    </location>
</feature>
<evidence type="ECO:0000255" key="1">
    <source>
        <dbReference type="HAMAP-Rule" id="MF_01398"/>
    </source>
</evidence>
<sequence>MSITFGELVGNFILVTGSVIVLLLLIKKFAWGAIESILQTRSQQISRDIDQAEQSRLSAQQLEAKSQANLDASRSQASKIISDAKEIGQLQGDKLVAEATDEAKRLKEKALTDIEQSKSDAISAVKTEMSDLTVLLAEKIMGANLDKTAQSQLIDSYLDDLGEA</sequence>
<dbReference type="EMBL" id="CP000259">
    <property type="protein sequence ID" value="ABF31819.1"/>
    <property type="molecule type" value="Genomic_DNA"/>
</dbReference>
<dbReference type="RefSeq" id="WP_002990420.1">
    <property type="nucleotide sequence ID" value="NC_008021.1"/>
</dbReference>
<dbReference type="SMR" id="Q1JMJ3"/>
<dbReference type="GeneID" id="69901118"/>
<dbReference type="KEGG" id="spk:MGAS9429_Spy0631"/>
<dbReference type="HOGENOM" id="CLU_079215_4_2_9"/>
<dbReference type="Proteomes" id="UP000002433">
    <property type="component" value="Chromosome"/>
</dbReference>
<dbReference type="GO" id="GO:0005886">
    <property type="term" value="C:plasma membrane"/>
    <property type="evidence" value="ECO:0007669"/>
    <property type="project" value="UniProtKB-SubCell"/>
</dbReference>
<dbReference type="GO" id="GO:0045259">
    <property type="term" value="C:proton-transporting ATP synthase complex"/>
    <property type="evidence" value="ECO:0007669"/>
    <property type="project" value="UniProtKB-KW"/>
</dbReference>
<dbReference type="GO" id="GO:0046933">
    <property type="term" value="F:proton-transporting ATP synthase activity, rotational mechanism"/>
    <property type="evidence" value="ECO:0007669"/>
    <property type="project" value="UniProtKB-UniRule"/>
</dbReference>
<dbReference type="GO" id="GO:0046961">
    <property type="term" value="F:proton-transporting ATPase activity, rotational mechanism"/>
    <property type="evidence" value="ECO:0007669"/>
    <property type="project" value="TreeGrafter"/>
</dbReference>
<dbReference type="CDD" id="cd06503">
    <property type="entry name" value="ATP-synt_Fo_b"/>
    <property type="match status" value="1"/>
</dbReference>
<dbReference type="HAMAP" id="MF_01398">
    <property type="entry name" value="ATP_synth_b_bprime"/>
    <property type="match status" value="1"/>
</dbReference>
<dbReference type="InterPro" id="IPR028987">
    <property type="entry name" value="ATP_synth_B-like_membr_sf"/>
</dbReference>
<dbReference type="InterPro" id="IPR002146">
    <property type="entry name" value="ATP_synth_b/b'su_bac/chlpt"/>
</dbReference>
<dbReference type="InterPro" id="IPR005864">
    <property type="entry name" value="ATP_synth_F0_bsu_bac"/>
</dbReference>
<dbReference type="InterPro" id="IPR050059">
    <property type="entry name" value="ATP_synthase_B_chain"/>
</dbReference>
<dbReference type="NCBIfam" id="TIGR01144">
    <property type="entry name" value="ATP_synt_b"/>
    <property type="match status" value="1"/>
</dbReference>
<dbReference type="PANTHER" id="PTHR33445:SF1">
    <property type="entry name" value="ATP SYNTHASE SUBUNIT B"/>
    <property type="match status" value="1"/>
</dbReference>
<dbReference type="PANTHER" id="PTHR33445">
    <property type="entry name" value="ATP SYNTHASE SUBUNIT B', CHLOROPLASTIC"/>
    <property type="match status" value="1"/>
</dbReference>
<dbReference type="Pfam" id="PF00430">
    <property type="entry name" value="ATP-synt_B"/>
    <property type="match status" value="1"/>
</dbReference>
<dbReference type="SUPFAM" id="SSF81573">
    <property type="entry name" value="F1F0 ATP synthase subunit B, membrane domain"/>
    <property type="match status" value="1"/>
</dbReference>
<protein>
    <recommendedName>
        <fullName evidence="1">ATP synthase subunit b</fullName>
    </recommendedName>
    <alternativeName>
        <fullName evidence="1">ATP synthase F(0) sector subunit b</fullName>
    </alternativeName>
    <alternativeName>
        <fullName evidence="1">ATPase subunit I</fullName>
    </alternativeName>
    <alternativeName>
        <fullName evidence="1">F-type ATPase subunit b</fullName>
        <shortName evidence="1">F-ATPase subunit b</shortName>
    </alternativeName>
</protein>
<proteinExistence type="inferred from homology"/>
<gene>
    <name evidence="1" type="primary">atpF</name>
    <name type="ordered locus">MGAS9429_Spy0631</name>
</gene>
<organism>
    <name type="scientific">Streptococcus pyogenes serotype M12 (strain MGAS9429)</name>
    <dbReference type="NCBI Taxonomy" id="370551"/>
    <lineage>
        <taxon>Bacteria</taxon>
        <taxon>Bacillati</taxon>
        <taxon>Bacillota</taxon>
        <taxon>Bacilli</taxon>
        <taxon>Lactobacillales</taxon>
        <taxon>Streptococcaceae</taxon>
        <taxon>Streptococcus</taxon>
    </lineage>
</organism>